<feature type="chain" id="PRO_1000068974" description="Cytidine deaminase">
    <location>
        <begin position="1"/>
        <end position="294"/>
    </location>
</feature>
<feature type="domain" description="CMP/dCMP-type deaminase 1" evidence="2">
    <location>
        <begin position="48"/>
        <end position="168"/>
    </location>
</feature>
<feature type="domain" description="CMP/dCMP-type deaminase 2" evidence="2">
    <location>
        <begin position="187"/>
        <end position="294"/>
    </location>
</feature>
<feature type="active site" description="Proton donor" evidence="1">
    <location>
        <position position="104"/>
    </location>
</feature>
<feature type="binding site" evidence="1">
    <location>
        <begin position="89"/>
        <end position="91"/>
    </location>
    <ligand>
        <name>substrate</name>
    </ligand>
</feature>
<feature type="binding site" evidence="1">
    <location>
        <position position="102"/>
    </location>
    <ligand>
        <name>Zn(2+)</name>
        <dbReference type="ChEBI" id="CHEBI:29105"/>
        <note>catalytic</note>
    </ligand>
</feature>
<feature type="binding site" evidence="1">
    <location>
        <position position="129"/>
    </location>
    <ligand>
        <name>Zn(2+)</name>
        <dbReference type="ChEBI" id="CHEBI:29105"/>
        <note>catalytic</note>
    </ligand>
</feature>
<feature type="binding site" evidence="1">
    <location>
        <position position="132"/>
    </location>
    <ligand>
        <name>Zn(2+)</name>
        <dbReference type="ChEBI" id="CHEBI:29105"/>
        <note>catalytic</note>
    </ligand>
</feature>
<proteinExistence type="inferred from homology"/>
<protein>
    <recommendedName>
        <fullName evidence="1">Cytidine deaminase</fullName>
        <ecNumber evidence="1">3.5.4.5</ecNumber>
    </recommendedName>
    <alternativeName>
        <fullName evidence="1">Cytidine aminohydrolase</fullName>
        <shortName evidence="1">CDA</shortName>
    </alternativeName>
</protein>
<name>CDD_YERPN</name>
<keyword id="KW-0378">Hydrolase</keyword>
<keyword id="KW-0479">Metal-binding</keyword>
<keyword id="KW-0862">Zinc</keyword>
<gene>
    <name evidence="1" type="primary">cdd</name>
    <name type="ordered locus">YPN_2467</name>
    <name type="ORF">YP516_2780</name>
</gene>
<evidence type="ECO:0000255" key="1">
    <source>
        <dbReference type="HAMAP-Rule" id="MF_01558"/>
    </source>
</evidence>
<evidence type="ECO:0000255" key="2">
    <source>
        <dbReference type="PROSITE-ProRule" id="PRU01083"/>
    </source>
</evidence>
<sequence>MQARFHTSWAELPASLQFALEPILSAENFPAMLTAEQVKTVKNISGLDDDALAFALLPLATACALTPISHFNVGAIARGKSGNFYFGANMEFRGVPLQQTIHAEQCAVTHAWLRGETNLVAITVNYTPCGHCRQFMNELNSGSELHIHLPGRPPSTLGQYLPDSFGPTDLAITTLLMDPVNHGYTLAETDPLTQAALNAANHSHAPYSQSHSGVALETTNGKIYAGRYAENAAFNPSLPPLQAALILANITGENCASIRRAVLVEGHNAVTSQWDTTLATLNALGCSAVKRVTF</sequence>
<reference key="1">
    <citation type="journal article" date="2006" name="J. Bacteriol.">
        <title>Complete genome sequence of Yersinia pestis strains Antiqua and Nepal516: evidence of gene reduction in an emerging pathogen.</title>
        <authorList>
            <person name="Chain P.S.G."/>
            <person name="Hu P."/>
            <person name="Malfatti S.A."/>
            <person name="Radnedge L."/>
            <person name="Larimer F."/>
            <person name="Vergez L.M."/>
            <person name="Worsham P."/>
            <person name="Chu M.C."/>
            <person name="Andersen G.L."/>
        </authorList>
    </citation>
    <scope>NUCLEOTIDE SEQUENCE [LARGE SCALE GENOMIC DNA]</scope>
    <source>
        <strain>Nepal516</strain>
    </source>
</reference>
<reference key="2">
    <citation type="submission" date="2009-04" db="EMBL/GenBank/DDBJ databases">
        <title>Yersinia pestis Nepal516A whole genome shotgun sequencing project.</title>
        <authorList>
            <person name="Plunkett G. III"/>
            <person name="Anderson B.D."/>
            <person name="Baumler D.J."/>
            <person name="Burland V."/>
            <person name="Cabot E.L."/>
            <person name="Glasner J.D."/>
            <person name="Mau B."/>
            <person name="Neeno-Eckwall E."/>
            <person name="Perna N.T."/>
            <person name="Munk A.C."/>
            <person name="Tapia R."/>
            <person name="Green L.D."/>
            <person name="Rogers Y.C."/>
            <person name="Detter J.C."/>
            <person name="Bruce D.C."/>
            <person name="Brettin T.S."/>
        </authorList>
    </citation>
    <scope>NUCLEOTIDE SEQUENCE [LARGE SCALE GENOMIC DNA]</scope>
    <source>
        <strain>Nepal516</strain>
    </source>
</reference>
<organism>
    <name type="scientific">Yersinia pestis bv. Antiqua (strain Nepal516)</name>
    <dbReference type="NCBI Taxonomy" id="377628"/>
    <lineage>
        <taxon>Bacteria</taxon>
        <taxon>Pseudomonadati</taxon>
        <taxon>Pseudomonadota</taxon>
        <taxon>Gammaproteobacteria</taxon>
        <taxon>Enterobacterales</taxon>
        <taxon>Yersiniaceae</taxon>
        <taxon>Yersinia</taxon>
    </lineage>
</organism>
<dbReference type="EC" id="3.5.4.5" evidence="1"/>
<dbReference type="EMBL" id="CP000305">
    <property type="protein sequence ID" value="ABG18795.1"/>
    <property type="molecule type" value="Genomic_DNA"/>
</dbReference>
<dbReference type="EMBL" id="ACNQ01000014">
    <property type="protein sequence ID" value="EEO76033.1"/>
    <property type="molecule type" value="Genomic_DNA"/>
</dbReference>
<dbReference type="RefSeq" id="WP_002211969.1">
    <property type="nucleotide sequence ID" value="NZ_ACNQ01000014.1"/>
</dbReference>
<dbReference type="SMR" id="Q1CGT5"/>
<dbReference type="GeneID" id="57977056"/>
<dbReference type="KEGG" id="ypn:YPN_2467"/>
<dbReference type="HOGENOM" id="CLU_052424_0_0_6"/>
<dbReference type="Proteomes" id="UP000008936">
    <property type="component" value="Chromosome"/>
</dbReference>
<dbReference type="GO" id="GO:0005829">
    <property type="term" value="C:cytosol"/>
    <property type="evidence" value="ECO:0007669"/>
    <property type="project" value="TreeGrafter"/>
</dbReference>
<dbReference type="GO" id="GO:0004126">
    <property type="term" value="F:cytidine deaminase activity"/>
    <property type="evidence" value="ECO:0007669"/>
    <property type="project" value="UniProtKB-UniRule"/>
</dbReference>
<dbReference type="GO" id="GO:0042802">
    <property type="term" value="F:identical protein binding"/>
    <property type="evidence" value="ECO:0007669"/>
    <property type="project" value="UniProtKB-ARBA"/>
</dbReference>
<dbReference type="GO" id="GO:0008270">
    <property type="term" value="F:zinc ion binding"/>
    <property type="evidence" value="ECO:0007669"/>
    <property type="project" value="UniProtKB-UniRule"/>
</dbReference>
<dbReference type="GO" id="GO:0009972">
    <property type="term" value="P:cytidine deamination"/>
    <property type="evidence" value="ECO:0007669"/>
    <property type="project" value="InterPro"/>
</dbReference>
<dbReference type="CDD" id="cd01283">
    <property type="entry name" value="cytidine_deaminase"/>
    <property type="match status" value="2"/>
</dbReference>
<dbReference type="FunFam" id="3.40.140.10:FF:000006">
    <property type="entry name" value="Cytidine deaminase"/>
    <property type="match status" value="1"/>
</dbReference>
<dbReference type="FunFam" id="3.40.140.10:FF:000007">
    <property type="entry name" value="Cytidine deaminase"/>
    <property type="match status" value="1"/>
</dbReference>
<dbReference type="Gene3D" id="3.40.140.10">
    <property type="entry name" value="Cytidine Deaminase, domain 2"/>
    <property type="match status" value="2"/>
</dbReference>
<dbReference type="HAMAP" id="MF_01558">
    <property type="entry name" value="Cyt_deam"/>
    <property type="match status" value="1"/>
</dbReference>
<dbReference type="InterPro" id="IPR016192">
    <property type="entry name" value="APOBEC/CMP_deaminase_Zn-bd"/>
</dbReference>
<dbReference type="InterPro" id="IPR002125">
    <property type="entry name" value="CMP_dCMP_dom"/>
</dbReference>
<dbReference type="InterPro" id="IPR013171">
    <property type="entry name" value="Cyd/dCyd_deaminase_Zn-bd"/>
</dbReference>
<dbReference type="InterPro" id="IPR050202">
    <property type="entry name" value="Cyt/Deoxycyt_deaminase"/>
</dbReference>
<dbReference type="InterPro" id="IPR006263">
    <property type="entry name" value="Cyt_deam_dimer"/>
</dbReference>
<dbReference type="InterPro" id="IPR016193">
    <property type="entry name" value="Cytidine_deaminase-like"/>
</dbReference>
<dbReference type="InterPro" id="IPR020797">
    <property type="entry name" value="Cytidine_deaminase_bacteria"/>
</dbReference>
<dbReference type="NCBIfam" id="TIGR01355">
    <property type="entry name" value="cyt_deam_dimer"/>
    <property type="match status" value="1"/>
</dbReference>
<dbReference type="NCBIfam" id="NF006537">
    <property type="entry name" value="PRK09027.1"/>
    <property type="match status" value="1"/>
</dbReference>
<dbReference type="PANTHER" id="PTHR11644">
    <property type="entry name" value="CYTIDINE DEAMINASE"/>
    <property type="match status" value="1"/>
</dbReference>
<dbReference type="PANTHER" id="PTHR11644:SF2">
    <property type="entry name" value="CYTIDINE DEAMINASE"/>
    <property type="match status" value="1"/>
</dbReference>
<dbReference type="Pfam" id="PF00383">
    <property type="entry name" value="dCMP_cyt_deam_1"/>
    <property type="match status" value="1"/>
</dbReference>
<dbReference type="Pfam" id="PF08211">
    <property type="entry name" value="dCMP_cyt_deam_2"/>
    <property type="match status" value="1"/>
</dbReference>
<dbReference type="PIRSF" id="PIRSF006334">
    <property type="entry name" value="Cdd_plus_pseudo"/>
    <property type="match status" value="1"/>
</dbReference>
<dbReference type="SUPFAM" id="SSF53927">
    <property type="entry name" value="Cytidine deaminase-like"/>
    <property type="match status" value="2"/>
</dbReference>
<dbReference type="PROSITE" id="PS00903">
    <property type="entry name" value="CYT_DCMP_DEAMINASES_1"/>
    <property type="match status" value="1"/>
</dbReference>
<dbReference type="PROSITE" id="PS51747">
    <property type="entry name" value="CYT_DCMP_DEAMINASES_2"/>
    <property type="match status" value="2"/>
</dbReference>
<comment type="function">
    <text evidence="1">This enzyme scavenges exogenous and endogenous cytidine and 2'-deoxycytidine for UMP synthesis.</text>
</comment>
<comment type="catalytic activity">
    <reaction evidence="1">
        <text>cytidine + H2O + H(+) = uridine + NH4(+)</text>
        <dbReference type="Rhea" id="RHEA:16069"/>
        <dbReference type="ChEBI" id="CHEBI:15377"/>
        <dbReference type="ChEBI" id="CHEBI:15378"/>
        <dbReference type="ChEBI" id="CHEBI:16704"/>
        <dbReference type="ChEBI" id="CHEBI:17562"/>
        <dbReference type="ChEBI" id="CHEBI:28938"/>
        <dbReference type="EC" id="3.5.4.5"/>
    </reaction>
</comment>
<comment type="catalytic activity">
    <reaction evidence="1">
        <text>2'-deoxycytidine + H2O + H(+) = 2'-deoxyuridine + NH4(+)</text>
        <dbReference type="Rhea" id="RHEA:13433"/>
        <dbReference type="ChEBI" id="CHEBI:15377"/>
        <dbReference type="ChEBI" id="CHEBI:15378"/>
        <dbReference type="ChEBI" id="CHEBI:15698"/>
        <dbReference type="ChEBI" id="CHEBI:16450"/>
        <dbReference type="ChEBI" id="CHEBI:28938"/>
        <dbReference type="EC" id="3.5.4.5"/>
    </reaction>
</comment>
<comment type="cofactor">
    <cofactor evidence="1">
        <name>Zn(2+)</name>
        <dbReference type="ChEBI" id="CHEBI:29105"/>
    </cofactor>
    <text evidence="1">Binds 1 zinc ion.</text>
</comment>
<comment type="subunit">
    <text evidence="1">Homodimer.</text>
</comment>
<comment type="similarity">
    <text evidence="1">Belongs to the cytidine and deoxycytidylate deaminase family.</text>
</comment>
<accession>Q1CGT5</accession>
<accession>C4GVE9</accession>